<name>NAGB_SALTY</name>
<dbReference type="EC" id="3.5.99.6" evidence="1"/>
<dbReference type="EMBL" id="AE006468">
    <property type="protein sequence ID" value="AAL19628.1"/>
    <property type="molecule type" value="Genomic_DNA"/>
</dbReference>
<dbReference type="RefSeq" id="NP_459669.1">
    <property type="nucleotide sequence ID" value="NC_003197.2"/>
</dbReference>
<dbReference type="RefSeq" id="WP_001237059.1">
    <property type="nucleotide sequence ID" value="NC_003197.2"/>
</dbReference>
<dbReference type="SMR" id="Q8ZQX7"/>
<dbReference type="STRING" id="99287.STM0684"/>
<dbReference type="PaxDb" id="99287-STM0684"/>
<dbReference type="GeneID" id="1252204"/>
<dbReference type="KEGG" id="stm:STM0684"/>
<dbReference type="PATRIC" id="fig|99287.12.peg.714"/>
<dbReference type="HOGENOM" id="CLU_049611_0_1_6"/>
<dbReference type="OMA" id="HVITQGI"/>
<dbReference type="PhylomeDB" id="Q8ZQX7"/>
<dbReference type="BioCyc" id="SENT99287:STM0684-MONOMER"/>
<dbReference type="UniPathway" id="UPA00629">
    <property type="reaction ID" value="UER00684"/>
</dbReference>
<dbReference type="Proteomes" id="UP000001014">
    <property type="component" value="Chromosome"/>
</dbReference>
<dbReference type="GO" id="GO:0005737">
    <property type="term" value="C:cytoplasm"/>
    <property type="evidence" value="ECO:0000318"/>
    <property type="project" value="GO_Central"/>
</dbReference>
<dbReference type="GO" id="GO:0004342">
    <property type="term" value="F:glucosamine-6-phosphate deaminase activity"/>
    <property type="evidence" value="ECO:0000318"/>
    <property type="project" value="GO_Central"/>
</dbReference>
<dbReference type="GO" id="GO:0042802">
    <property type="term" value="F:identical protein binding"/>
    <property type="evidence" value="ECO:0000318"/>
    <property type="project" value="GO_Central"/>
</dbReference>
<dbReference type="GO" id="GO:0005975">
    <property type="term" value="P:carbohydrate metabolic process"/>
    <property type="evidence" value="ECO:0007669"/>
    <property type="project" value="InterPro"/>
</dbReference>
<dbReference type="GO" id="GO:0006043">
    <property type="term" value="P:glucosamine catabolic process"/>
    <property type="evidence" value="ECO:0000318"/>
    <property type="project" value="GO_Central"/>
</dbReference>
<dbReference type="GO" id="GO:0006046">
    <property type="term" value="P:N-acetylglucosamine catabolic process"/>
    <property type="evidence" value="ECO:0000318"/>
    <property type="project" value="GO_Central"/>
</dbReference>
<dbReference type="GO" id="GO:0019262">
    <property type="term" value="P:N-acetylneuraminate catabolic process"/>
    <property type="evidence" value="ECO:0000318"/>
    <property type="project" value="GO_Central"/>
</dbReference>
<dbReference type="CDD" id="cd01399">
    <property type="entry name" value="GlcN6P_deaminase"/>
    <property type="match status" value="1"/>
</dbReference>
<dbReference type="FunFam" id="3.40.50.1360:FF:000002">
    <property type="entry name" value="Glucosamine-6-phosphate deaminase"/>
    <property type="match status" value="1"/>
</dbReference>
<dbReference type="Gene3D" id="3.40.50.1360">
    <property type="match status" value="1"/>
</dbReference>
<dbReference type="HAMAP" id="MF_01241">
    <property type="entry name" value="GlcN6P_deamin"/>
    <property type="match status" value="1"/>
</dbReference>
<dbReference type="InterPro" id="IPR006148">
    <property type="entry name" value="Glc/Gal-6P_isomerase"/>
</dbReference>
<dbReference type="InterPro" id="IPR004547">
    <property type="entry name" value="Glucosamine6P_isomerase"/>
</dbReference>
<dbReference type="InterPro" id="IPR018321">
    <property type="entry name" value="Glucosamine6P_isomerase_CS"/>
</dbReference>
<dbReference type="InterPro" id="IPR037171">
    <property type="entry name" value="NagB/RpiA_transferase-like"/>
</dbReference>
<dbReference type="NCBIfam" id="TIGR00502">
    <property type="entry name" value="nagB"/>
    <property type="match status" value="1"/>
</dbReference>
<dbReference type="NCBIfam" id="NF001685">
    <property type="entry name" value="PRK00443.1-5"/>
    <property type="match status" value="1"/>
</dbReference>
<dbReference type="PANTHER" id="PTHR11280">
    <property type="entry name" value="GLUCOSAMINE-6-PHOSPHATE ISOMERASE"/>
    <property type="match status" value="1"/>
</dbReference>
<dbReference type="PANTHER" id="PTHR11280:SF5">
    <property type="entry name" value="GLUCOSAMINE-6-PHOSPHATE ISOMERASE"/>
    <property type="match status" value="1"/>
</dbReference>
<dbReference type="Pfam" id="PF01182">
    <property type="entry name" value="Glucosamine_iso"/>
    <property type="match status" value="1"/>
</dbReference>
<dbReference type="SUPFAM" id="SSF100950">
    <property type="entry name" value="NagB/RpiA/CoA transferase-like"/>
    <property type="match status" value="1"/>
</dbReference>
<dbReference type="PROSITE" id="PS01161">
    <property type="entry name" value="GLC_GALNAC_ISOMERASE"/>
    <property type="match status" value="1"/>
</dbReference>
<protein>
    <recommendedName>
        <fullName evidence="1">Glucosamine-6-phosphate deaminase</fullName>
        <ecNumber evidence="1">3.5.99.6</ecNumber>
    </recommendedName>
    <alternativeName>
        <fullName evidence="1">GlcN6P deaminase</fullName>
        <shortName evidence="1">GNPDA</shortName>
    </alternativeName>
    <alternativeName>
        <fullName evidence="1">Glucosamine-6-phosphate isomerase</fullName>
    </alternativeName>
</protein>
<sequence length="266" mass="29632">MRLIPLSTAEQVGKWAARHIVNRINAFKPTADRPFVLGLPTGGTPLTAYKALVEMHKAGEVSFKHVVTFNMDEYVGLPKEHPESYHSFMHRNFFDHVDIPAENINLLNGNAPDIDAECRQYEEKIRSYGKIHLFMGGVGNDGHIAFNEPASSLASRTRIKTLTHDTRVANSRFFDGDVNQVPKYALTVGVGTLLDAEEVMILVLGHQKAQALQAAVEGNVNHMWTISCLQLHPKAVVVCDEPSTMELKVKTLKYFNELEAENIKGL</sequence>
<accession>Q8ZQX7</accession>
<gene>
    <name evidence="1" type="primary">nagB</name>
    <name type="ordered locus">STM0684</name>
</gene>
<feature type="chain" id="PRO_0000160160" description="Glucosamine-6-phosphate deaminase">
    <location>
        <begin position="1"/>
        <end position="266"/>
    </location>
</feature>
<feature type="active site" description="Proton acceptor; for enolization step" evidence="1">
    <location>
        <position position="72"/>
    </location>
</feature>
<feature type="active site" description="For ring-opening step" evidence="1">
    <location>
        <position position="141"/>
    </location>
</feature>
<feature type="active site" description="Proton acceptor; for ring-opening step" evidence="1">
    <location>
        <position position="143"/>
    </location>
</feature>
<feature type="active site" description="For ring-opening step" evidence="1">
    <location>
        <position position="148"/>
    </location>
</feature>
<feature type="site" description="Part of the allosteric site" evidence="1">
    <location>
        <position position="151"/>
    </location>
</feature>
<feature type="site" description="Part of the allosteric site" evidence="1">
    <location>
        <position position="158"/>
    </location>
</feature>
<feature type="site" description="Part of the allosteric site" evidence="1">
    <location>
        <position position="160"/>
    </location>
</feature>
<feature type="site" description="Part of the allosteric site" evidence="1">
    <location>
        <position position="161"/>
    </location>
</feature>
<feature type="site" description="Part of the allosteric site" evidence="1">
    <location>
        <position position="254"/>
    </location>
</feature>
<evidence type="ECO:0000255" key="1">
    <source>
        <dbReference type="HAMAP-Rule" id="MF_01241"/>
    </source>
</evidence>
<comment type="function">
    <text evidence="1">Catalyzes the reversible isomerization-deamination of glucosamine 6-phosphate (GlcN6P) to form fructose 6-phosphate (Fru6P) and ammonium ion.</text>
</comment>
<comment type="catalytic activity">
    <reaction evidence="1">
        <text>alpha-D-glucosamine 6-phosphate + H2O = beta-D-fructose 6-phosphate + NH4(+)</text>
        <dbReference type="Rhea" id="RHEA:12172"/>
        <dbReference type="ChEBI" id="CHEBI:15377"/>
        <dbReference type="ChEBI" id="CHEBI:28938"/>
        <dbReference type="ChEBI" id="CHEBI:57634"/>
        <dbReference type="ChEBI" id="CHEBI:75989"/>
        <dbReference type="EC" id="3.5.99.6"/>
    </reaction>
</comment>
<comment type="activity regulation">
    <text evidence="1">Allosterically activated by N-acetylglucosamine 6-phosphate (GlcNAc6P).</text>
</comment>
<comment type="pathway">
    <text evidence="1">Amino-sugar metabolism; N-acetylneuraminate degradation; D-fructose 6-phosphate from N-acetylneuraminate: step 5/5.</text>
</comment>
<comment type="subunit">
    <text evidence="1">Homohexamer.</text>
</comment>
<comment type="similarity">
    <text evidence="1">Belongs to the glucosamine/galactosamine-6-phosphate isomerase family. NagB subfamily.</text>
</comment>
<reference key="1">
    <citation type="journal article" date="2001" name="Nature">
        <title>Complete genome sequence of Salmonella enterica serovar Typhimurium LT2.</title>
        <authorList>
            <person name="McClelland M."/>
            <person name="Sanderson K.E."/>
            <person name="Spieth J."/>
            <person name="Clifton S.W."/>
            <person name="Latreille P."/>
            <person name="Courtney L."/>
            <person name="Porwollik S."/>
            <person name="Ali J."/>
            <person name="Dante M."/>
            <person name="Du F."/>
            <person name="Hou S."/>
            <person name="Layman D."/>
            <person name="Leonard S."/>
            <person name="Nguyen C."/>
            <person name="Scott K."/>
            <person name="Holmes A."/>
            <person name="Grewal N."/>
            <person name="Mulvaney E."/>
            <person name="Ryan E."/>
            <person name="Sun H."/>
            <person name="Florea L."/>
            <person name="Miller W."/>
            <person name="Stoneking T."/>
            <person name="Nhan M."/>
            <person name="Waterston R."/>
            <person name="Wilson R.K."/>
        </authorList>
    </citation>
    <scope>NUCLEOTIDE SEQUENCE [LARGE SCALE GENOMIC DNA]</scope>
    <source>
        <strain>LT2 / SGSC1412 / ATCC 700720</strain>
    </source>
</reference>
<keyword id="KW-0021">Allosteric enzyme</keyword>
<keyword id="KW-0119">Carbohydrate metabolism</keyword>
<keyword id="KW-0378">Hydrolase</keyword>
<keyword id="KW-1185">Reference proteome</keyword>
<organism>
    <name type="scientific">Salmonella typhimurium (strain LT2 / SGSC1412 / ATCC 700720)</name>
    <dbReference type="NCBI Taxonomy" id="99287"/>
    <lineage>
        <taxon>Bacteria</taxon>
        <taxon>Pseudomonadati</taxon>
        <taxon>Pseudomonadota</taxon>
        <taxon>Gammaproteobacteria</taxon>
        <taxon>Enterobacterales</taxon>
        <taxon>Enterobacteriaceae</taxon>
        <taxon>Salmonella</taxon>
    </lineage>
</organism>
<proteinExistence type="inferred from homology"/>